<keyword id="KW-0143">Chaperone</keyword>
<keyword id="KW-0963">Cytoplasm</keyword>
<keyword id="KW-0533">Nickel</keyword>
<keyword id="KW-0996">Nickel insertion</keyword>
<sequence>MIIERLVGNLRDLNPLDFNVDHVDLEWFETRKKIARFKTRQGKDIAIRLKDAPKLGLSQGDILFKEEKEIIAVNILDSEVIHIQAKSVAEVAKICYEIGNRHAALYYGESQFEFKTPFEKPTLALLEKLGVQNRVLSSKLDSKERLTVSMPHSEPNFKVSLASDFKVVMK</sequence>
<accession>Q1CV84</accession>
<proteinExistence type="inferred from homology"/>
<organism>
    <name type="scientific">Helicobacter pylori (strain HPAG1)</name>
    <dbReference type="NCBI Taxonomy" id="357544"/>
    <lineage>
        <taxon>Bacteria</taxon>
        <taxon>Pseudomonadati</taxon>
        <taxon>Campylobacterota</taxon>
        <taxon>Epsilonproteobacteria</taxon>
        <taxon>Campylobacterales</taxon>
        <taxon>Helicobacteraceae</taxon>
        <taxon>Helicobacter</taxon>
    </lineage>
</organism>
<feature type="chain" id="PRO_1000062548" description="Urease accessory protein UreE">
    <location>
        <begin position="1"/>
        <end position="170"/>
    </location>
</feature>
<name>UREE_HELPH</name>
<protein>
    <recommendedName>
        <fullName evidence="1">Urease accessory protein UreE</fullName>
    </recommendedName>
</protein>
<evidence type="ECO:0000255" key="1">
    <source>
        <dbReference type="HAMAP-Rule" id="MF_00822"/>
    </source>
</evidence>
<comment type="function">
    <text evidence="1">Involved in urease metallocenter assembly. Binds nickel. Probably functions as a nickel donor during metallocenter assembly.</text>
</comment>
<comment type="subcellular location">
    <subcellularLocation>
        <location evidence="1">Cytoplasm</location>
    </subcellularLocation>
</comment>
<comment type="similarity">
    <text evidence="1">Belongs to the UreE family.</text>
</comment>
<gene>
    <name evidence="1" type="primary">ureE</name>
    <name type="ordered locus">HPAG1_0071</name>
</gene>
<dbReference type="EMBL" id="CP000241">
    <property type="protein sequence ID" value="ABF84138.1"/>
    <property type="molecule type" value="Genomic_DNA"/>
</dbReference>
<dbReference type="RefSeq" id="WP_000583090.1">
    <property type="nucleotide sequence ID" value="NC_008086.1"/>
</dbReference>
<dbReference type="SMR" id="Q1CV84"/>
<dbReference type="KEGG" id="hpa:HPAG1_0071"/>
<dbReference type="HOGENOM" id="CLU_093757_3_0_7"/>
<dbReference type="GO" id="GO:0005737">
    <property type="term" value="C:cytoplasm"/>
    <property type="evidence" value="ECO:0007669"/>
    <property type="project" value="UniProtKB-SubCell"/>
</dbReference>
<dbReference type="GO" id="GO:0016151">
    <property type="term" value="F:nickel cation binding"/>
    <property type="evidence" value="ECO:0007669"/>
    <property type="project" value="UniProtKB-UniRule"/>
</dbReference>
<dbReference type="GO" id="GO:0051082">
    <property type="term" value="F:unfolded protein binding"/>
    <property type="evidence" value="ECO:0007669"/>
    <property type="project" value="UniProtKB-UniRule"/>
</dbReference>
<dbReference type="GO" id="GO:0006457">
    <property type="term" value="P:protein folding"/>
    <property type="evidence" value="ECO:0007669"/>
    <property type="project" value="InterPro"/>
</dbReference>
<dbReference type="GO" id="GO:0065003">
    <property type="term" value="P:protein-containing complex assembly"/>
    <property type="evidence" value="ECO:0007669"/>
    <property type="project" value="InterPro"/>
</dbReference>
<dbReference type="GO" id="GO:0019627">
    <property type="term" value="P:urea metabolic process"/>
    <property type="evidence" value="ECO:0007669"/>
    <property type="project" value="InterPro"/>
</dbReference>
<dbReference type="CDD" id="cd00571">
    <property type="entry name" value="UreE"/>
    <property type="match status" value="1"/>
</dbReference>
<dbReference type="Gene3D" id="2.60.260.20">
    <property type="entry name" value="Urease metallochaperone UreE, N-terminal domain"/>
    <property type="match status" value="1"/>
</dbReference>
<dbReference type="Gene3D" id="3.30.70.790">
    <property type="entry name" value="UreE, C-terminal domain"/>
    <property type="match status" value="1"/>
</dbReference>
<dbReference type="HAMAP" id="MF_00822">
    <property type="entry name" value="UreE"/>
    <property type="match status" value="1"/>
</dbReference>
<dbReference type="InterPro" id="IPR012406">
    <property type="entry name" value="UreE"/>
</dbReference>
<dbReference type="InterPro" id="IPR007864">
    <property type="entry name" value="UreE_C_dom"/>
</dbReference>
<dbReference type="InterPro" id="IPR004029">
    <property type="entry name" value="UreE_N"/>
</dbReference>
<dbReference type="InterPro" id="IPR036118">
    <property type="entry name" value="UreE_N_sf"/>
</dbReference>
<dbReference type="NCBIfam" id="NF009754">
    <property type="entry name" value="PRK13261.1-6"/>
    <property type="match status" value="1"/>
</dbReference>
<dbReference type="Pfam" id="PF05194">
    <property type="entry name" value="UreE_C"/>
    <property type="match status" value="1"/>
</dbReference>
<dbReference type="Pfam" id="PF02814">
    <property type="entry name" value="UreE_N"/>
    <property type="match status" value="1"/>
</dbReference>
<dbReference type="PIRSF" id="PIRSF036402">
    <property type="entry name" value="Ureas_acces_UreE"/>
    <property type="match status" value="1"/>
</dbReference>
<dbReference type="SMART" id="SM00988">
    <property type="entry name" value="UreE_N"/>
    <property type="match status" value="1"/>
</dbReference>
<dbReference type="SUPFAM" id="SSF69737">
    <property type="entry name" value="Urease metallochaperone UreE, C-terminal domain"/>
    <property type="match status" value="1"/>
</dbReference>
<dbReference type="SUPFAM" id="SSF69287">
    <property type="entry name" value="Urease metallochaperone UreE, N-terminal domain"/>
    <property type="match status" value="1"/>
</dbReference>
<reference key="1">
    <citation type="journal article" date="2006" name="Proc. Natl. Acad. Sci. U.S.A.">
        <title>The complete genome sequence of a chronic atrophic gastritis Helicobacter pylori strain: evolution during disease progression.</title>
        <authorList>
            <person name="Oh J.D."/>
            <person name="Kling-Baeckhed H."/>
            <person name="Giannakis M."/>
            <person name="Xu J."/>
            <person name="Fulton R.S."/>
            <person name="Fulton L.A."/>
            <person name="Cordum H.S."/>
            <person name="Wang C."/>
            <person name="Elliott G."/>
            <person name="Edwards J."/>
            <person name="Mardis E.R."/>
            <person name="Engstrand L.G."/>
            <person name="Gordon J.I."/>
        </authorList>
    </citation>
    <scope>NUCLEOTIDE SEQUENCE [LARGE SCALE GENOMIC DNA]</scope>
    <source>
        <strain>HPAG1</strain>
    </source>
</reference>